<proteinExistence type="inferred from homology"/>
<feature type="chain" id="PRO_0000370942" description="ATP synthase subunit delta">
    <location>
        <begin position="1"/>
        <end position="177"/>
    </location>
</feature>
<keyword id="KW-0066">ATP synthesis</keyword>
<keyword id="KW-0997">Cell inner membrane</keyword>
<keyword id="KW-1003">Cell membrane</keyword>
<keyword id="KW-0139">CF(1)</keyword>
<keyword id="KW-0375">Hydrogen ion transport</keyword>
<keyword id="KW-0406">Ion transport</keyword>
<keyword id="KW-0472">Membrane</keyword>
<keyword id="KW-1185">Reference proteome</keyword>
<keyword id="KW-0813">Transport</keyword>
<comment type="function">
    <text evidence="1">F(1)F(0) ATP synthase produces ATP from ADP in the presence of a proton or sodium gradient. F-type ATPases consist of two structural domains, F(1) containing the extramembraneous catalytic core and F(0) containing the membrane proton channel, linked together by a central stalk and a peripheral stalk. During catalysis, ATP synthesis in the catalytic domain of F(1) is coupled via a rotary mechanism of the central stalk subunits to proton translocation.</text>
</comment>
<comment type="function">
    <text evidence="1">This protein is part of the stalk that links CF(0) to CF(1). It either transmits conformational changes from CF(0) to CF(1) or is implicated in proton conduction.</text>
</comment>
<comment type="subunit">
    <text evidence="1">F-type ATPases have 2 components, F(1) - the catalytic core - and F(0) - the membrane proton channel. F(1) has five subunits: alpha(3), beta(3), gamma(1), delta(1), epsilon(1). F(0) has three main subunits: a(1), b(2) and c(10-14). The alpha and beta chains form an alternating ring which encloses part of the gamma chain. F(1) is attached to F(0) by a central stalk formed by the gamma and epsilon chains, while a peripheral stalk is formed by the delta and b chains.</text>
</comment>
<comment type="subcellular location">
    <subcellularLocation>
        <location evidence="1">Cell inner membrane</location>
        <topology evidence="1">Peripheral membrane protein</topology>
    </subcellularLocation>
</comment>
<comment type="similarity">
    <text evidence="1">Belongs to the ATPase delta chain family.</text>
</comment>
<evidence type="ECO:0000255" key="1">
    <source>
        <dbReference type="HAMAP-Rule" id="MF_01416"/>
    </source>
</evidence>
<dbReference type="EMBL" id="CP000822">
    <property type="protein sequence ID" value="ABV11254.1"/>
    <property type="molecule type" value="Genomic_DNA"/>
</dbReference>
<dbReference type="RefSeq" id="WP_012000833.1">
    <property type="nucleotide sequence ID" value="NC_009792.1"/>
</dbReference>
<dbReference type="SMR" id="A8ACP0"/>
<dbReference type="STRING" id="290338.CKO_00075"/>
<dbReference type="GeneID" id="45134376"/>
<dbReference type="KEGG" id="cko:CKO_00075"/>
<dbReference type="HOGENOM" id="CLU_085114_3_0_6"/>
<dbReference type="OrthoDB" id="9816221at2"/>
<dbReference type="Proteomes" id="UP000008148">
    <property type="component" value="Chromosome"/>
</dbReference>
<dbReference type="GO" id="GO:0005886">
    <property type="term" value="C:plasma membrane"/>
    <property type="evidence" value="ECO:0007669"/>
    <property type="project" value="UniProtKB-SubCell"/>
</dbReference>
<dbReference type="GO" id="GO:0045259">
    <property type="term" value="C:proton-transporting ATP synthase complex"/>
    <property type="evidence" value="ECO:0007669"/>
    <property type="project" value="UniProtKB-KW"/>
</dbReference>
<dbReference type="GO" id="GO:0046933">
    <property type="term" value="F:proton-transporting ATP synthase activity, rotational mechanism"/>
    <property type="evidence" value="ECO:0007669"/>
    <property type="project" value="UniProtKB-UniRule"/>
</dbReference>
<dbReference type="FunFam" id="1.10.520.20:FF:000001">
    <property type="entry name" value="ATP synthase subunit delta"/>
    <property type="match status" value="1"/>
</dbReference>
<dbReference type="Gene3D" id="1.10.520.20">
    <property type="entry name" value="N-terminal domain of the delta subunit of the F1F0-ATP synthase"/>
    <property type="match status" value="1"/>
</dbReference>
<dbReference type="HAMAP" id="MF_01416">
    <property type="entry name" value="ATP_synth_delta_bact"/>
    <property type="match status" value="1"/>
</dbReference>
<dbReference type="InterPro" id="IPR026015">
    <property type="entry name" value="ATP_synth_OSCP/delta_N_sf"/>
</dbReference>
<dbReference type="InterPro" id="IPR020781">
    <property type="entry name" value="ATPase_OSCP/d_CS"/>
</dbReference>
<dbReference type="InterPro" id="IPR000711">
    <property type="entry name" value="ATPase_OSCP/dsu"/>
</dbReference>
<dbReference type="NCBIfam" id="TIGR01145">
    <property type="entry name" value="ATP_synt_delta"/>
    <property type="match status" value="1"/>
</dbReference>
<dbReference type="NCBIfam" id="NF004402">
    <property type="entry name" value="PRK05758.2-2"/>
    <property type="match status" value="1"/>
</dbReference>
<dbReference type="NCBIfam" id="NF004404">
    <property type="entry name" value="PRK05758.2-5"/>
    <property type="match status" value="1"/>
</dbReference>
<dbReference type="PANTHER" id="PTHR11910">
    <property type="entry name" value="ATP SYNTHASE DELTA CHAIN"/>
    <property type="match status" value="1"/>
</dbReference>
<dbReference type="Pfam" id="PF00213">
    <property type="entry name" value="OSCP"/>
    <property type="match status" value="1"/>
</dbReference>
<dbReference type="PRINTS" id="PR00125">
    <property type="entry name" value="ATPASEDELTA"/>
</dbReference>
<dbReference type="SUPFAM" id="SSF47928">
    <property type="entry name" value="N-terminal domain of the delta subunit of the F1F0-ATP synthase"/>
    <property type="match status" value="1"/>
</dbReference>
<dbReference type="PROSITE" id="PS00389">
    <property type="entry name" value="ATPASE_DELTA"/>
    <property type="match status" value="1"/>
</dbReference>
<name>ATPD_CITK8</name>
<sequence>MSEFVTVARPYAKAAFDFAVEHQSVERWQDMLAFAAEVTKNEQMAELLSGALAPETLAESFIAVCGEQLDENGQNLIRVMAENNRLNALPDVLEQFIHLRAASESTSEVEVTSATALSEEQLAKISAAMEKRLSRKVKLNCKIDKSVMAGVIIRAGDMVIDGSVRGRLERLADVLQS</sequence>
<gene>
    <name evidence="1" type="primary">atpH</name>
    <name type="ordered locus">CKO_00075</name>
</gene>
<accession>A8ACP0</accession>
<organism>
    <name type="scientific">Citrobacter koseri (strain ATCC BAA-895 / CDC 4225-83 / SGSC4696)</name>
    <dbReference type="NCBI Taxonomy" id="290338"/>
    <lineage>
        <taxon>Bacteria</taxon>
        <taxon>Pseudomonadati</taxon>
        <taxon>Pseudomonadota</taxon>
        <taxon>Gammaproteobacteria</taxon>
        <taxon>Enterobacterales</taxon>
        <taxon>Enterobacteriaceae</taxon>
        <taxon>Citrobacter</taxon>
    </lineage>
</organism>
<protein>
    <recommendedName>
        <fullName evidence="1">ATP synthase subunit delta</fullName>
    </recommendedName>
    <alternativeName>
        <fullName evidence="1">ATP synthase F(1) sector subunit delta</fullName>
    </alternativeName>
    <alternativeName>
        <fullName evidence="1">F-type ATPase subunit delta</fullName>
        <shortName evidence="1">F-ATPase subunit delta</shortName>
    </alternativeName>
</protein>
<reference key="1">
    <citation type="submission" date="2007-08" db="EMBL/GenBank/DDBJ databases">
        <authorList>
            <consortium name="The Citrobacter koseri Genome Sequencing Project"/>
            <person name="McClelland M."/>
            <person name="Sanderson E.K."/>
            <person name="Porwollik S."/>
            <person name="Spieth J."/>
            <person name="Clifton W.S."/>
            <person name="Latreille P."/>
            <person name="Courtney L."/>
            <person name="Wang C."/>
            <person name="Pepin K."/>
            <person name="Bhonagiri V."/>
            <person name="Nash W."/>
            <person name="Johnson M."/>
            <person name="Thiruvilangam P."/>
            <person name="Wilson R."/>
        </authorList>
    </citation>
    <scope>NUCLEOTIDE SEQUENCE [LARGE SCALE GENOMIC DNA]</scope>
    <source>
        <strain>ATCC BAA-895 / CDC 4225-83 / SGSC4696</strain>
    </source>
</reference>